<organism>
    <name type="scientific">Prosthecochloris aestuarii (strain DSM 271 / SK 413)</name>
    <dbReference type="NCBI Taxonomy" id="290512"/>
    <lineage>
        <taxon>Bacteria</taxon>
        <taxon>Pseudomonadati</taxon>
        <taxon>Chlorobiota</taxon>
        <taxon>Chlorobiia</taxon>
        <taxon>Chlorobiales</taxon>
        <taxon>Chlorobiaceae</taxon>
        <taxon>Prosthecochloris</taxon>
    </lineage>
</organism>
<name>RPOC_PROA2</name>
<feature type="chain" id="PRO_0000353407" description="DNA-directed RNA polymerase subunit beta'">
    <location>
        <begin position="1"/>
        <end position="1499"/>
    </location>
</feature>
<feature type="binding site" evidence="1">
    <location>
        <position position="67"/>
    </location>
    <ligand>
        <name>Zn(2+)</name>
        <dbReference type="ChEBI" id="CHEBI:29105"/>
        <label>1</label>
    </ligand>
</feature>
<feature type="binding site" evidence="1">
    <location>
        <position position="69"/>
    </location>
    <ligand>
        <name>Zn(2+)</name>
        <dbReference type="ChEBI" id="CHEBI:29105"/>
        <label>1</label>
    </ligand>
</feature>
<feature type="binding site" evidence="1">
    <location>
        <position position="82"/>
    </location>
    <ligand>
        <name>Zn(2+)</name>
        <dbReference type="ChEBI" id="CHEBI:29105"/>
        <label>1</label>
    </ligand>
</feature>
<feature type="binding site" evidence="1">
    <location>
        <position position="85"/>
    </location>
    <ligand>
        <name>Zn(2+)</name>
        <dbReference type="ChEBI" id="CHEBI:29105"/>
        <label>1</label>
    </ligand>
</feature>
<feature type="binding site" evidence="1">
    <location>
        <position position="499"/>
    </location>
    <ligand>
        <name>Mg(2+)</name>
        <dbReference type="ChEBI" id="CHEBI:18420"/>
    </ligand>
</feature>
<feature type="binding site" evidence="1">
    <location>
        <position position="501"/>
    </location>
    <ligand>
        <name>Mg(2+)</name>
        <dbReference type="ChEBI" id="CHEBI:18420"/>
    </ligand>
</feature>
<feature type="binding site" evidence="1">
    <location>
        <position position="503"/>
    </location>
    <ligand>
        <name>Mg(2+)</name>
        <dbReference type="ChEBI" id="CHEBI:18420"/>
    </ligand>
</feature>
<feature type="binding site" evidence="1">
    <location>
        <position position="867"/>
    </location>
    <ligand>
        <name>Zn(2+)</name>
        <dbReference type="ChEBI" id="CHEBI:29105"/>
        <label>2</label>
    </ligand>
</feature>
<feature type="binding site" evidence="1">
    <location>
        <position position="943"/>
    </location>
    <ligand>
        <name>Zn(2+)</name>
        <dbReference type="ChEBI" id="CHEBI:29105"/>
        <label>2</label>
    </ligand>
</feature>
<feature type="binding site" evidence="1">
    <location>
        <position position="950"/>
    </location>
    <ligand>
        <name>Zn(2+)</name>
        <dbReference type="ChEBI" id="CHEBI:29105"/>
        <label>2</label>
    </ligand>
</feature>
<feature type="binding site" evidence="1">
    <location>
        <position position="953"/>
    </location>
    <ligand>
        <name>Zn(2+)</name>
        <dbReference type="ChEBI" id="CHEBI:29105"/>
        <label>2</label>
    </ligand>
</feature>
<dbReference type="EC" id="2.7.7.6" evidence="1"/>
<dbReference type="EMBL" id="CP001108">
    <property type="protein sequence ID" value="ACF45346.1"/>
    <property type="molecule type" value="Genomic_DNA"/>
</dbReference>
<dbReference type="RefSeq" id="WP_012504883.1">
    <property type="nucleotide sequence ID" value="NC_011059.1"/>
</dbReference>
<dbReference type="SMR" id="B4S498"/>
<dbReference type="STRING" id="290512.Paes_0289"/>
<dbReference type="KEGG" id="paa:Paes_0289"/>
<dbReference type="eggNOG" id="COG0086">
    <property type="taxonomic scope" value="Bacteria"/>
</dbReference>
<dbReference type="HOGENOM" id="CLU_000524_3_1_10"/>
<dbReference type="Proteomes" id="UP000002725">
    <property type="component" value="Chromosome"/>
</dbReference>
<dbReference type="GO" id="GO:0000428">
    <property type="term" value="C:DNA-directed RNA polymerase complex"/>
    <property type="evidence" value="ECO:0007669"/>
    <property type="project" value="UniProtKB-KW"/>
</dbReference>
<dbReference type="GO" id="GO:0003677">
    <property type="term" value="F:DNA binding"/>
    <property type="evidence" value="ECO:0007669"/>
    <property type="project" value="UniProtKB-UniRule"/>
</dbReference>
<dbReference type="GO" id="GO:0003899">
    <property type="term" value="F:DNA-directed RNA polymerase activity"/>
    <property type="evidence" value="ECO:0007669"/>
    <property type="project" value="UniProtKB-UniRule"/>
</dbReference>
<dbReference type="GO" id="GO:0000287">
    <property type="term" value="F:magnesium ion binding"/>
    <property type="evidence" value="ECO:0007669"/>
    <property type="project" value="UniProtKB-UniRule"/>
</dbReference>
<dbReference type="GO" id="GO:0008270">
    <property type="term" value="F:zinc ion binding"/>
    <property type="evidence" value="ECO:0007669"/>
    <property type="project" value="UniProtKB-UniRule"/>
</dbReference>
<dbReference type="GO" id="GO:0006351">
    <property type="term" value="P:DNA-templated transcription"/>
    <property type="evidence" value="ECO:0007669"/>
    <property type="project" value="UniProtKB-UniRule"/>
</dbReference>
<dbReference type="CDD" id="cd02655">
    <property type="entry name" value="RNAP_beta'_C"/>
    <property type="match status" value="1"/>
</dbReference>
<dbReference type="CDD" id="cd01609">
    <property type="entry name" value="RNAP_beta'_N"/>
    <property type="match status" value="1"/>
</dbReference>
<dbReference type="FunFam" id="1.10.150.390:FF:000002">
    <property type="entry name" value="DNA-directed RNA polymerase subunit beta"/>
    <property type="match status" value="1"/>
</dbReference>
<dbReference type="Gene3D" id="1.10.132.30">
    <property type="match status" value="1"/>
</dbReference>
<dbReference type="Gene3D" id="1.10.150.390">
    <property type="match status" value="1"/>
</dbReference>
<dbReference type="Gene3D" id="1.10.1790.20">
    <property type="match status" value="1"/>
</dbReference>
<dbReference type="Gene3D" id="1.10.40.90">
    <property type="match status" value="1"/>
</dbReference>
<dbReference type="Gene3D" id="2.40.40.20">
    <property type="match status" value="1"/>
</dbReference>
<dbReference type="Gene3D" id="2.40.50.100">
    <property type="match status" value="3"/>
</dbReference>
<dbReference type="Gene3D" id="4.10.860.120">
    <property type="entry name" value="RNA polymerase II, clamp domain"/>
    <property type="match status" value="1"/>
</dbReference>
<dbReference type="Gene3D" id="1.10.274.100">
    <property type="entry name" value="RNA polymerase Rpb1, domain 3"/>
    <property type="match status" value="1"/>
</dbReference>
<dbReference type="HAMAP" id="MF_01322">
    <property type="entry name" value="RNApol_bact_RpoC"/>
    <property type="match status" value="1"/>
</dbReference>
<dbReference type="InterPro" id="IPR045867">
    <property type="entry name" value="DNA-dir_RpoC_beta_prime"/>
</dbReference>
<dbReference type="InterPro" id="IPR012754">
    <property type="entry name" value="DNA-dir_RpoC_beta_prime_bact"/>
</dbReference>
<dbReference type="InterPro" id="IPR000722">
    <property type="entry name" value="RNA_pol_asu"/>
</dbReference>
<dbReference type="InterPro" id="IPR006592">
    <property type="entry name" value="RNA_pol_N"/>
</dbReference>
<dbReference type="InterPro" id="IPR007080">
    <property type="entry name" value="RNA_pol_Rpb1_1"/>
</dbReference>
<dbReference type="InterPro" id="IPR007066">
    <property type="entry name" value="RNA_pol_Rpb1_3"/>
</dbReference>
<dbReference type="InterPro" id="IPR042102">
    <property type="entry name" value="RNA_pol_Rpb1_3_sf"/>
</dbReference>
<dbReference type="InterPro" id="IPR007083">
    <property type="entry name" value="RNA_pol_Rpb1_4"/>
</dbReference>
<dbReference type="InterPro" id="IPR007081">
    <property type="entry name" value="RNA_pol_Rpb1_5"/>
</dbReference>
<dbReference type="InterPro" id="IPR044893">
    <property type="entry name" value="RNA_pol_Rpb1_clamp_domain"/>
</dbReference>
<dbReference type="InterPro" id="IPR038120">
    <property type="entry name" value="Rpb1_funnel_sf"/>
</dbReference>
<dbReference type="NCBIfam" id="TIGR02386">
    <property type="entry name" value="rpoC_TIGR"/>
    <property type="match status" value="1"/>
</dbReference>
<dbReference type="PANTHER" id="PTHR19376">
    <property type="entry name" value="DNA-DIRECTED RNA POLYMERASE"/>
    <property type="match status" value="1"/>
</dbReference>
<dbReference type="PANTHER" id="PTHR19376:SF54">
    <property type="entry name" value="DNA-DIRECTED RNA POLYMERASE SUBUNIT BETA"/>
    <property type="match status" value="1"/>
</dbReference>
<dbReference type="Pfam" id="PF04997">
    <property type="entry name" value="RNA_pol_Rpb1_1"/>
    <property type="match status" value="1"/>
</dbReference>
<dbReference type="Pfam" id="PF00623">
    <property type="entry name" value="RNA_pol_Rpb1_2"/>
    <property type="match status" value="2"/>
</dbReference>
<dbReference type="Pfam" id="PF04983">
    <property type="entry name" value="RNA_pol_Rpb1_3"/>
    <property type="match status" value="1"/>
</dbReference>
<dbReference type="Pfam" id="PF05000">
    <property type="entry name" value="RNA_pol_Rpb1_4"/>
    <property type="match status" value="1"/>
</dbReference>
<dbReference type="Pfam" id="PF04998">
    <property type="entry name" value="RNA_pol_Rpb1_5"/>
    <property type="match status" value="1"/>
</dbReference>
<dbReference type="SMART" id="SM00663">
    <property type="entry name" value="RPOLA_N"/>
    <property type="match status" value="1"/>
</dbReference>
<dbReference type="SUPFAM" id="SSF64484">
    <property type="entry name" value="beta and beta-prime subunits of DNA dependent RNA-polymerase"/>
    <property type="match status" value="1"/>
</dbReference>
<keyword id="KW-0240">DNA-directed RNA polymerase</keyword>
<keyword id="KW-0460">Magnesium</keyword>
<keyword id="KW-0479">Metal-binding</keyword>
<keyword id="KW-0548">Nucleotidyltransferase</keyword>
<keyword id="KW-0804">Transcription</keyword>
<keyword id="KW-0808">Transferase</keyword>
<keyword id="KW-0862">Zinc</keyword>
<reference key="1">
    <citation type="submission" date="2008-06" db="EMBL/GenBank/DDBJ databases">
        <title>Complete sequence of chromosome of Prosthecochloris aestuarii DSM 271.</title>
        <authorList>
            <consortium name="US DOE Joint Genome Institute"/>
            <person name="Lucas S."/>
            <person name="Copeland A."/>
            <person name="Lapidus A."/>
            <person name="Glavina del Rio T."/>
            <person name="Dalin E."/>
            <person name="Tice H."/>
            <person name="Bruce D."/>
            <person name="Goodwin L."/>
            <person name="Pitluck S."/>
            <person name="Schmutz J."/>
            <person name="Larimer F."/>
            <person name="Land M."/>
            <person name="Hauser L."/>
            <person name="Kyrpides N."/>
            <person name="Anderson I."/>
            <person name="Liu Z."/>
            <person name="Li T."/>
            <person name="Zhao F."/>
            <person name="Overmann J."/>
            <person name="Bryant D.A."/>
            <person name="Richardson P."/>
        </authorList>
    </citation>
    <scope>NUCLEOTIDE SEQUENCE [LARGE SCALE GENOMIC DNA]</scope>
    <source>
        <strain>DSM 271 / SK 413</strain>
    </source>
</reference>
<proteinExistence type="inferred from homology"/>
<accession>B4S498</accession>
<evidence type="ECO:0000255" key="1">
    <source>
        <dbReference type="HAMAP-Rule" id="MF_01322"/>
    </source>
</evidence>
<protein>
    <recommendedName>
        <fullName evidence="1">DNA-directed RNA polymerase subunit beta'</fullName>
        <shortName evidence="1">RNAP subunit beta'</shortName>
        <ecNumber evidence="1">2.7.7.6</ecNumber>
    </recommendedName>
    <alternativeName>
        <fullName evidence="1">RNA polymerase subunit beta'</fullName>
    </alternativeName>
    <alternativeName>
        <fullName evidence="1">Transcriptase subunit beta'</fullName>
    </alternativeName>
</protein>
<comment type="function">
    <text evidence="1">DNA-dependent RNA polymerase catalyzes the transcription of DNA into RNA using the four ribonucleoside triphosphates as substrates.</text>
</comment>
<comment type="catalytic activity">
    <reaction evidence="1">
        <text>RNA(n) + a ribonucleoside 5'-triphosphate = RNA(n+1) + diphosphate</text>
        <dbReference type="Rhea" id="RHEA:21248"/>
        <dbReference type="Rhea" id="RHEA-COMP:14527"/>
        <dbReference type="Rhea" id="RHEA-COMP:17342"/>
        <dbReference type="ChEBI" id="CHEBI:33019"/>
        <dbReference type="ChEBI" id="CHEBI:61557"/>
        <dbReference type="ChEBI" id="CHEBI:140395"/>
        <dbReference type="EC" id="2.7.7.6"/>
    </reaction>
</comment>
<comment type="cofactor">
    <cofactor evidence="1">
        <name>Mg(2+)</name>
        <dbReference type="ChEBI" id="CHEBI:18420"/>
    </cofactor>
    <text evidence="1">Binds 1 Mg(2+) ion per subunit.</text>
</comment>
<comment type="cofactor">
    <cofactor evidence="1">
        <name>Zn(2+)</name>
        <dbReference type="ChEBI" id="CHEBI:29105"/>
    </cofactor>
    <text evidence="1">Binds 2 Zn(2+) ions per subunit.</text>
</comment>
<comment type="subunit">
    <text evidence="1">The RNAP catalytic core consists of 2 alpha, 1 beta, 1 beta' and 1 omega subunit. When a sigma factor is associated with the core the holoenzyme is formed, which can initiate transcription.</text>
</comment>
<comment type="similarity">
    <text evidence="1">Belongs to the RNA polymerase beta' chain family.</text>
</comment>
<gene>
    <name evidence="1" type="primary">rpoC</name>
    <name type="ordered locus">Paes_0289</name>
</gene>
<sequence>MIFSQGSSPFKGDFSKIKFSIASPESVLAHSRGEVLKPETINYRTFKPERDGLMCEKIFGPTKDWECYCGKYKRVRYKGIICDRCGVEVTMKSVRRERMGHISLAVPVVHTWFFRSVPSKIGALLDLSTKELERIIYYEVYVVINPGDPGEKQGIKKLDRLTEEQYFQIITEYEDNQDLDDDDPAKFVAKMGGEAIHTLLKGLNLDESAVGLRKVLKESGSEQKRADALKRLKVVEAFRKSYEPQKKTRKKPGGLFPEDEMPEPYIFEGNKPEYMVMEVIPVIPPELRPLVPLEGGRFATSDLNDLYRRVIIRNNRLKKLIDIRAPEVILRNEKRMLQEAVDALFDNSRKANAVKTGESNRPLKSLSDALKGKQGRFRQNLLGKRVDYSGRSVIVVGPELKLHECGLPKSMAIELFQPFVIRRLVERGIAKSVKSAKKLIDKKDPIVWDVLEKVIDGRPVLLNRAPTLHRLGIQAFQPTLIEGKAIQIHPLVCTAFNADFDGDQMAVHVPLSQEAQLEASLLMLSSHNLILPQSGKPVTVPSQDMVLGMYYLTKSRIGENGQGNIFYSNEEVLIAHNEERLGLHALVFIKYDGHVEQKFDPVRLLDIISDDESEKKAWLKKEIEAKRLLVTTVGRVIFNQYVPEKIGFVNKVIDKKGAKELISKICSEVGNVQAAEFLDNIKQVGYHYAMKGGLSIGLADAIIPEAKIQLIKKATKESNKILREYNRGTLTENERYNQIVDVWQKVTNLVAEESYQKLRKDRVGFNPLFMMLDSGARGSREQVRQLTGMRGLIARPQKSMSGQPGEIIENPIISNLKEGLTVLEYFVSTHGARKGLSDTSLKTADAGYLTRRLHDVAQDVIVTIDDCGTTRGLHVERSIEEETGGQIKFSDKIRGRVASRDIWDTLKDEIVVPAGGIITEDIADAIQANIGVLEADIRSVLTCEAKQGICSKCYGTNLAVHKIVEIGEAVGVIAAQSIGEPGTQLTLRTFHQGGTAQGGIAETETKAVYEGQVEFENIRTVEQETINEDGMPEVRILVIQKNGRINIVDPDSGKVLKRHDVPHGASLHRSVGDLVKKEDVLFSSEPNSTQIIAELEGYVKFADIEKGVTYKEEVDPQTGYVQHVIINWRSKLRASETREPRIMIVSESGEILKTYPVPIKSNLFVEDNKKVSIGDILAKVPRNLDRVGGDITAGLPKVTELFEARIPSDPAIVSEIDGYVGFGSQRRSSKEIKVKNEFGEEKTYYVQVGKHVLANEGDEVTAGEPLTDGAISPQDILRIQGPNAVQQYLVNEIQKVYQINAGVEISDKHLEVIVRQMLQKVRVEEPGDTELLPGDLIDRTVFIEANTAIAEKVRVIDKGDAPARIQEDQLYKLKEITKLNRELRKNSKSLIVVEPAIQATSHPVLLGITSAALQTESVISAASFQETTKVLTDAAVAGKIDNLLGLKENVIVGKLIPAGTGLKAYRKLELNKVYPEAAEIAVPEVDEAAPASSDDDAAE</sequence>